<name>SYGA_CAMJR</name>
<keyword id="KW-0030">Aminoacyl-tRNA synthetase</keyword>
<keyword id="KW-0067">ATP-binding</keyword>
<keyword id="KW-0963">Cytoplasm</keyword>
<keyword id="KW-0436">Ligase</keyword>
<keyword id="KW-0547">Nucleotide-binding</keyword>
<keyword id="KW-0648">Protein biosynthesis</keyword>
<proteinExistence type="inferred from homology"/>
<feature type="chain" id="PRO_1000047410" description="Glycine--tRNA ligase alpha subunit">
    <location>
        <begin position="1"/>
        <end position="287"/>
    </location>
</feature>
<reference key="1">
    <citation type="journal article" date="2005" name="PLoS Biol.">
        <title>Major structural differences and novel potential virulence mechanisms from the genomes of multiple Campylobacter species.</title>
        <authorList>
            <person name="Fouts D.E."/>
            <person name="Mongodin E.F."/>
            <person name="Mandrell R.E."/>
            <person name="Miller W.G."/>
            <person name="Rasko D.A."/>
            <person name="Ravel J."/>
            <person name="Brinkac L.M."/>
            <person name="DeBoy R.T."/>
            <person name="Parker C.T."/>
            <person name="Daugherty S.C."/>
            <person name="Dodson R.J."/>
            <person name="Durkin A.S."/>
            <person name="Madupu R."/>
            <person name="Sullivan S.A."/>
            <person name="Shetty J.U."/>
            <person name="Ayodeji M.A."/>
            <person name="Shvartsbeyn A."/>
            <person name="Schatz M.C."/>
            <person name="Badger J.H."/>
            <person name="Fraser C.M."/>
            <person name="Nelson K.E."/>
        </authorList>
    </citation>
    <scope>NUCLEOTIDE SEQUENCE [LARGE SCALE GENOMIC DNA]</scope>
    <source>
        <strain>RM1221</strain>
    </source>
</reference>
<accession>Q5HV77</accession>
<gene>
    <name evidence="1" type="primary">glyQ</name>
    <name type="ordered locus">CJE0804</name>
</gene>
<evidence type="ECO:0000255" key="1">
    <source>
        <dbReference type="HAMAP-Rule" id="MF_00254"/>
    </source>
</evidence>
<protein>
    <recommendedName>
        <fullName evidence="1">Glycine--tRNA ligase alpha subunit</fullName>
        <ecNumber evidence="1">6.1.1.14</ecNumber>
    </recommendedName>
    <alternativeName>
        <fullName evidence="1">Glycyl-tRNA synthetase alpha subunit</fullName>
        <shortName evidence="1">GlyRS</shortName>
    </alternativeName>
</protein>
<sequence>MTFSQMILNLQNYWQEQGCAIMQPYDMPAGAGTFHPATFLRSLGKKPWAAAYVAPSRRPTDGRYGENPNRLGAYYQFQVLIKPSPDNIQELYLKSLENLGFDLKSHDIRFVEDNWESPSLGAWGLGWEVWLDGMEVTQFTYFQQVGGIAVDLVSAEITYGLERIAMYLQNVDNVYDIVWSEFNGEKIKYADVHKQSEYEFSKYNFEISDVKILNEQFENSYKECKNILEQGLALPAYDYCMLAAHTFNLLDARGSISVAQRQDYMLKIRELSKNCAEIYKKNLNEAE</sequence>
<organism>
    <name type="scientific">Campylobacter jejuni (strain RM1221)</name>
    <dbReference type="NCBI Taxonomy" id="195099"/>
    <lineage>
        <taxon>Bacteria</taxon>
        <taxon>Pseudomonadati</taxon>
        <taxon>Campylobacterota</taxon>
        <taxon>Epsilonproteobacteria</taxon>
        <taxon>Campylobacterales</taxon>
        <taxon>Campylobacteraceae</taxon>
        <taxon>Campylobacter</taxon>
    </lineage>
</organism>
<comment type="catalytic activity">
    <reaction evidence="1">
        <text>tRNA(Gly) + glycine + ATP = glycyl-tRNA(Gly) + AMP + diphosphate</text>
        <dbReference type="Rhea" id="RHEA:16013"/>
        <dbReference type="Rhea" id="RHEA-COMP:9664"/>
        <dbReference type="Rhea" id="RHEA-COMP:9683"/>
        <dbReference type="ChEBI" id="CHEBI:30616"/>
        <dbReference type="ChEBI" id="CHEBI:33019"/>
        <dbReference type="ChEBI" id="CHEBI:57305"/>
        <dbReference type="ChEBI" id="CHEBI:78442"/>
        <dbReference type="ChEBI" id="CHEBI:78522"/>
        <dbReference type="ChEBI" id="CHEBI:456215"/>
        <dbReference type="EC" id="6.1.1.14"/>
    </reaction>
</comment>
<comment type="subunit">
    <text evidence="1">Tetramer of two alpha and two beta subunits.</text>
</comment>
<comment type="subcellular location">
    <subcellularLocation>
        <location evidence="1">Cytoplasm</location>
    </subcellularLocation>
</comment>
<comment type="similarity">
    <text evidence="1">Belongs to the class-II aminoacyl-tRNA synthetase family.</text>
</comment>
<dbReference type="EC" id="6.1.1.14" evidence="1"/>
<dbReference type="EMBL" id="CP000025">
    <property type="protein sequence ID" value="AAW34589.1"/>
    <property type="molecule type" value="Genomic_DNA"/>
</dbReference>
<dbReference type="RefSeq" id="WP_002867855.1">
    <property type="nucleotide sequence ID" value="NC_003912.7"/>
</dbReference>
<dbReference type="SMR" id="Q5HV77"/>
<dbReference type="KEGG" id="cjr:CJE0804"/>
<dbReference type="HOGENOM" id="CLU_057066_1_0_7"/>
<dbReference type="GO" id="GO:0005829">
    <property type="term" value="C:cytosol"/>
    <property type="evidence" value="ECO:0007669"/>
    <property type="project" value="TreeGrafter"/>
</dbReference>
<dbReference type="GO" id="GO:0005524">
    <property type="term" value="F:ATP binding"/>
    <property type="evidence" value="ECO:0007669"/>
    <property type="project" value="UniProtKB-UniRule"/>
</dbReference>
<dbReference type="GO" id="GO:0004820">
    <property type="term" value="F:glycine-tRNA ligase activity"/>
    <property type="evidence" value="ECO:0007669"/>
    <property type="project" value="UniProtKB-UniRule"/>
</dbReference>
<dbReference type="GO" id="GO:0006426">
    <property type="term" value="P:glycyl-tRNA aminoacylation"/>
    <property type="evidence" value="ECO:0007669"/>
    <property type="project" value="UniProtKB-UniRule"/>
</dbReference>
<dbReference type="CDD" id="cd00733">
    <property type="entry name" value="GlyRS_alpha_core"/>
    <property type="match status" value="1"/>
</dbReference>
<dbReference type="FunFam" id="3.30.930.10:FF:000006">
    <property type="entry name" value="Glycine--tRNA ligase alpha subunit"/>
    <property type="match status" value="1"/>
</dbReference>
<dbReference type="Gene3D" id="3.30.930.10">
    <property type="entry name" value="Bira Bifunctional Protein, Domain 2"/>
    <property type="match status" value="1"/>
</dbReference>
<dbReference type="Gene3D" id="1.20.58.180">
    <property type="entry name" value="Class II aaRS and biotin synthetases, domain 2"/>
    <property type="match status" value="1"/>
</dbReference>
<dbReference type="HAMAP" id="MF_00254">
    <property type="entry name" value="Gly_tRNA_synth_alpha"/>
    <property type="match status" value="1"/>
</dbReference>
<dbReference type="InterPro" id="IPR045864">
    <property type="entry name" value="aa-tRNA-synth_II/BPL/LPL"/>
</dbReference>
<dbReference type="InterPro" id="IPR006194">
    <property type="entry name" value="Gly-tRNA-synth_heterodimer"/>
</dbReference>
<dbReference type="InterPro" id="IPR002310">
    <property type="entry name" value="Gly-tRNA_ligase_asu"/>
</dbReference>
<dbReference type="NCBIfam" id="TIGR00388">
    <property type="entry name" value="glyQ"/>
    <property type="match status" value="1"/>
</dbReference>
<dbReference type="NCBIfam" id="NF006827">
    <property type="entry name" value="PRK09348.1"/>
    <property type="match status" value="1"/>
</dbReference>
<dbReference type="PANTHER" id="PTHR30075:SF2">
    <property type="entry name" value="GLYCINE--TRNA LIGASE, CHLOROPLASTIC_MITOCHONDRIAL 2"/>
    <property type="match status" value="1"/>
</dbReference>
<dbReference type="PANTHER" id="PTHR30075">
    <property type="entry name" value="GLYCYL-TRNA SYNTHETASE"/>
    <property type="match status" value="1"/>
</dbReference>
<dbReference type="Pfam" id="PF02091">
    <property type="entry name" value="tRNA-synt_2e"/>
    <property type="match status" value="1"/>
</dbReference>
<dbReference type="PRINTS" id="PR01044">
    <property type="entry name" value="TRNASYNTHGA"/>
</dbReference>
<dbReference type="SUPFAM" id="SSF55681">
    <property type="entry name" value="Class II aaRS and biotin synthetases"/>
    <property type="match status" value="1"/>
</dbReference>
<dbReference type="PROSITE" id="PS50861">
    <property type="entry name" value="AA_TRNA_LIGASE_II_GLYAB"/>
    <property type="match status" value="1"/>
</dbReference>